<comment type="function">
    <text evidence="1">PPIases accelerate the folding of proteins. It catalyzes the cis-trans isomerization of proline imidic peptide bonds in oligopeptides. May be involved in pre-mRNA splicing (By similarity).</text>
</comment>
<comment type="catalytic activity">
    <reaction>
        <text>[protein]-peptidylproline (omega=180) = [protein]-peptidylproline (omega=0)</text>
        <dbReference type="Rhea" id="RHEA:16237"/>
        <dbReference type="Rhea" id="RHEA-COMP:10747"/>
        <dbReference type="Rhea" id="RHEA-COMP:10748"/>
        <dbReference type="ChEBI" id="CHEBI:83833"/>
        <dbReference type="ChEBI" id="CHEBI:83834"/>
        <dbReference type="EC" id="5.2.1.8"/>
    </reaction>
</comment>
<comment type="subunit">
    <text evidence="1">Identified in the spliceosome C complex.</text>
</comment>
<comment type="similarity">
    <text evidence="5">Belongs to the cyclophilin-type PPIase family. PPIL3 subfamily.</text>
</comment>
<reference key="1">
    <citation type="submission" date="2000-10" db="EMBL/GenBank/DDBJ databases">
        <authorList>
            <person name="Yu L."/>
        </authorList>
    </citation>
    <scope>NUCLEOTIDE SEQUENCE [MRNA]</scope>
</reference>
<reference key="2">
    <citation type="journal article" date="2004" name="Genome Res.">
        <title>The status, quality, and expansion of the NIH full-length cDNA project: the Mammalian Gene Collection (MGC).</title>
        <authorList>
            <consortium name="The MGC Project Team"/>
        </authorList>
    </citation>
    <scope>NUCLEOTIDE SEQUENCE [LARGE SCALE MRNA]</scope>
    <source>
        <tissue>Ovary</tissue>
    </source>
</reference>
<sequence length="161" mass="18113">MSVTLHTDVGDIKIEVFCERTPKTCENFLALCASNYYNGCVFHRNIKGFMVQTGDPTGTGRGGSSIWGKKFEDEYSEYLKHNVRGVVSMANNGPNTNGSQFFITYGKQPHLDMKYTVFGKVIDGLETLDELEKLPVNEKTYRPLNDVHIKDITIHANPFAQ</sequence>
<feature type="initiator methionine" description="Removed" evidence="3">
    <location>
        <position position="1"/>
    </location>
</feature>
<feature type="chain" id="PRO_0000064168" description="Peptidyl-prolyl cis-trans isomerase-like 3">
    <location>
        <begin position="2"/>
        <end position="161"/>
    </location>
</feature>
<feature type="domain" description="PPIase cyclophilin-type" evidence="4">
    <location>
        <begin position="2"/>
        <end position="154"/>
    </location>
</feature>
<feature type="modified residue" description="N-acetylserine" evidence="3">
    <location>
        <position position="2"/>
    </location>
</feature>
<feature type="modified residue" description="Omega-N-methylarginine" evidence="2">
    <location>
        <position position="61"/>
    </location>
</feature>
<gene>
    <name type="primary">Ppil3</name>
    <name type="synonym">Cyp10l</name>
</gene>
<accession>Q812D3</accession>
<protein>
    <recommendedName>
        <fullName>Peptidyl-prolyl cis-trans isomerase-like 3</fullName>
        <shortName>PPIase</shortName>
        <ecNumber>5.2.1.8</ecNumber>
    </recommendedName>
    <alternativeName>
        <fullName>CYP10L</fullName>
    </alternativeName>
    <alternativeName>
        <fullName>Cyclophilin-like protein PPIL3</fullName>
    </alternativeName>
    <alternativeName>
        <fullName>Rotamase PPIL3</fullName>
    </alternativeName>
</protein>
<proteinExistence type="evidence at transcript level"/>
<evidence type="ECO:0000250" key="1"/>
<evidence type="ECO:0000250" key="2">
    <source>
        <dbReference type="UniProtKB" id="Q9D6L8"/>
    </source>
</evidence>
<evidence type="ECO:0000250" key="3">
    <source>
        <dbReference type="UniProtKB" id="Q9H2H8"/>
    </source>
</evidence>
<evidence type="ECO:0000255" key="4">
    <source>
        <dbReference type="PROSITE-ProRule" id="PRU00156"/>
    </source>
</evidence>
<evidence type="ECO:0000305" key="5"/>
<dbReference type="EC" id="5.2.1.8"/>
<dbReference type="EMBL" id="AF315802">
    <property type="protein sequence ID" value="AAO32943.1"/>
    <property type="molecule type" value="mRNA"/>
</dbReference>
<dbReference type="EMBL" id="BC087645">
    <property type="protein sequence ID" value="AAH87645.1"/>
    <property type="molecule type" value="mRNA"/>
</dbReference>
<dbReference type="RefSeq" id="NP_783638.1">
    <property type="nucleotide sequence ID" value="NM_175707.3"/>
</dbReference>
<dbReference type="RefSeq" id="XP_006245026.1">
    <property type="nucleotide sequence ID" value="XM_006244964.5"/>
</dbReference>
<dbReference type="RefSeq" id="XP_017451851.1">
    <property type="nucleotide sequence ID" value="XM_017596362.3"/>
</dbReference>
<dbReference type="SMR" id="Q812D3"/>
<dbReference type="FunCoup" id="Q812D3">
    <property type="interactions" value="3367"/>
</dbReference>
<dbReference type="STRING" id="10116.ENSRNOP00000018284"/>
<dbReference type="PhosphoSitePlus" id="Q812D3"/>
<dbReference type="jPOST" id="Q812D3"/>
<dbReference type="PaxDb" id="10116-ENSRNOP00000018284"/>
<dbReference type="Ensembl" id="ENSRNOT00000103798.1">
    <property type="protein sequence ID" value="ENSRNOP00000079425.1"/>
    <property type="gene ID" value="ENSRNOG00000013636.6"/>
</dbReference>
<dbReference type="GeneID" id="301432"/>
<dbReference type="KEGG" id="rno:301432"/>
<dbReference type="UCSC" id="RGD:631415">
    <property type="organism name" value="rat"/>
</dbReference>
<dbReference type="AGR" id="RGD:631415"/>
<dbReference type="CTD" id="53938"/>
<dbReference type="RGD" id="631415">
    <property type="gene designation" value="Ppil3"/>
</dbReference>
<dbReference type="eggNOG" id="KOG0884">
    <property type="taxonomic scope" value="Eukaryota"/>
</dbReference>
<dbReference type="GeneTree" id="ENSGT00940000163579"/>
<dbReference type="HOGENOM" id="CLU_012062_16_3_1"/>
<dbReference type="InParanoid" id="Q812D3"/>
<dbReference type="OrthoDB" id="560at9989"/>
<dbReference type="PhylomeDB" id="Q812D3"/>
<dbReference type="TreeFam" id="TF352224"/>
<dbReference type="Reactome" id="R-RNO-72163">
    <property type="pathway name" value="mRNA Splicing - Major Pathway"/>
</dbReference>
<dbReference type="PRO" id="PR:Q812D3"/>
<dbReference type="Proteomes" id="UP000002494">
    <property type="component" value="Chromosome 9"/>
</dbReference>
<dbReference type="Bgee" id="ENSRNOG00000013636">
    <property type="expression patterns" value="Expressed in quadriceps femoris and 20 other cell types or tissues"/>
</dbReference>
<dbReference type="GO" id="GO:0071013">
    <property type="term" value="C:catalytic step 2 spliceosome"/>
    <property type="evidence" value="ECO:0000266"/>
    <property type="project" value="RGD"/>
</dbReference>
<dbReference type="GO" id="GO:0003755">
    <property type="term" value="F:peptidyl-prolyl cis-trans isomerase activity"/>
    <property type="evidence" value="ECO:0000318"/>
    <property type="project" value="GO_Central"/>
</dbReference>
<dbReference type="GO" id="GO:0006397">
    <property type="term" value="P:mRNA processing"/>
    <property type="evidence" value="ECO:0007669"/>
    <property type="project" value="UniProtKB-KW"/>
</dbReference>
<dbReference type="GO" id="GO:0006457">
    <property type="term" value="P:protein folding"/>
    <property type="evidence" value="ECO:0000318"/>
    <property type="project" value="GO_Central"/>
</dbReference>
<dbReference type="GO" id="GO:0008380">
    <property type="term" value="P:RNA splicing"/>
    <property type="evidence" value="ECO:0007669"/>
    <property type="project" value="UniProtKB-KW"/>
</dbReference>
<dbReference type="CDD" id="cd01928">
    <property type="entry name" value="Cyclophilin_PPIL3_like"/>
    <property type="match status" value="1"/>
</dbReference>
<dbReference type="FunFam" id="2.40.100.10:FF:000012">
    <property type="entry name" value="Peptidyl-prolyl cis-trans isomerase"/>
    <property type="match status" value="1"/>
</dbReference>
<dbReference type="Gene3D" id="2.40.100.10">
    <property type="entry name" value="Cyclophilin-like"/>
    <property type="match status" value="1"/>
</dbReference>
<dbReference type="InterPro" id="IPR029000">
    <property type="entry name" value="Cyclophilin-like_dom_sf"/>
</dbReference>
<dbReference type="InterPro" id="IPR024936">
    <property type="entry name" value="Cyclophilin-type_PPIase"/>
</dbReference>
<dbReference type="InterPro" id="IPR020892">
    <property type="entry name" value="Cyclophilin-type_PPIase_CS"/>
</dbReference>
<dbReference type="InterPro" id="IPR002130">
    <property type="entry name" value="Cyclophilin-type_PPIase_dom"/>
</dbReference>
<dbReference type="InterPro" id="IPR044666">
    <property type="entry name" value="Cyclophilin_A-like"/>
</dbReference>
<dbReference type="PANTHER" id="PTHR45625:SF2">
    <property type="entry name" value="PEPTIDYL-PROLYL CIS-TRANS ISOMERASE-LIKE 3"/>
    <property type="match status" value="1"/>
</dbReference>
<dbReference type="PANTHER" id="PTHR45625">
    <property type="entry name" value="PEPTIDYL-PROLYL CIS-TRANS ISOMERASE-RELATED"/>
    <property type="match status" value="1"/>
</dbReference>
<dbReference type="Pfam" id="PF00160">
    <property type="entry name" value="Pro_isomerase"/>
    <property type="match status" value="1"/>
</dbReference>
<dbReference type="PIRSF" id="PIRSF001467">
    <property type="entry name" value="Peptidylpro_ismrse"/>
    <property type="match status" value="1"/>
</dbReference>
<dbReference type="PRINTS" id="PR00153">
    <property type="entry name" value="CSAPPISMRASE"/>
</dbReference>
<dbReference type="SUPFAM" id="SSF50891">
    <property type="entry name" value="Cyclophilin-like"/>
    <property type="match status" value="1"/>
</dbReference>
<dbReference type="PROSITE" id="PS00170">
    <property type="entry name" value="CSA_PPIASE_1"/>
    <property type="match status" value="1"/>
</dbReference>
<dbReference type="PROSITE" id="PS50072">
    <property type="entry name" value="CSA_PPIASE_2"/>
    <property type="match status" value="1"/>
</dbReference>
<organism>
    <name type="scientific">Rattus norvegicus</name>
    <name type="common">Rat</name>
    <dbReference type="NCBI Taxonomy" id="10116"/>
    <lineage>
        <taxon>Eukaryota</taxon>
        <taxon>Metazoa</taxon>
        <taxon>Chordata</taxon>
        <taxon>Craniata</taxon>
        <taxon>Vertebrata</taxon>
        <taxon>Euteleostomi</taxon>
        <taxon>Mammalia</taxon>
        <taxon>Eutheria</taxon>
        <taxon>Euarchontoglires</taxon>
        <taxon>Glires</taxon>
        <taxon>Rodentia</taxon>
        <taxon>Myomorpha</taxon>
        <taxon>Muroidea</taxon>
        <taxon>Muridae</taxon>
        <taxon>Murinae</taxon>
        <taxon>Rattus</taxon>
    </lineage>
</organism>
<keyword id="KW-0007">Acetylation</keyword>
<keyword id="KW-0413">Isomerase</keyword>
<keyword id="KW-0488">Methylation</keyword>
<keyword id="KW-0507">mRNA processing</keyword>
<keyword id="KW-0508">mRNA splicing</keyword>
<keyword id="KW-1185">Reference proteome</keyword>
<keyword id="KW-0697">Rotamase</keyword>
<keyword id="KW-0747">Spliceosome</keyword>
<name>PPIL3_RAT</name>